<name>SYK_NEIMB</name>
<dbReference type="EC" id="6.1.1.6" evidence="1"/>
<dbReference type="EMBL" id="AE002098">
    <property type="protein sequence ID" value="AAF41786.1"/>
    <property type="molecule type" value="Genomic_DNA"/>
</dbReference>
<dbReference type="PIR" id="C81086">
    <property type="entry name" value="C81086"/>
</dbReference>
<dbReference type="RefSeq" id="NP_274437.1">
    <property type="nucleotide sequence ID" value="NC_003112.2"/>
</dbReference>
<dbReference type="RefSeq" id="WP_002225120.1">
    <property type="nucleotide sequence ID" value="NC_003112.2"/>
</dbReference>
<dbReference type="SMR" id="Q9JYU6"/>
<dbReference type="FunCoup" id="Q9JYU6">
    <property type="interactions" value="578"/>
</dbReference>
<dbReference type="STRING" id="122586.NMB1425"/>
<dbReference type="PaxDb" id="122586-NMB1425"/>
<dbReference type="KEGG" id="nme:NMB1425"/>
<dbReference type="PATRIC" id="fig|122586.8.peg.1784"/>
<dbReference type="HOGENOM" id="CLU_008255_6_0_4"/>
<dbReference type="InParanoid" id="Q9JYU6"/>
<dbReference type="OrthoDB" id="9801152at2"/>
<dbReference type="Proteomes" id="UP000000425">
    <property type="component" value="Chromosome"/>
</dbReference>
<dbReference type="GO" id="GO:0005737">
    <property type="term" value="C:cytoplasm"/>
    <property type="evidence" value="ECO:0000318"/>
    <property type="project" value="GO_Central"/>
</dbReference>
<dbReference type="GO" id="GO:0005829">
    <property type="term" value="C:cytosol"/>
    <property type="evidence" value="ECO:0000318"/>
    <property type="project" value="GO_Central"/>
</dbReference>
<dbReference type="GO" id="GO:0005524">
    <property type="term" value="F:ATP binding"/>
    <property type="evidence" value="ECO:0007669"/>
    <property type="project" value="UniProtKB-UniRule"/>
</dbReference>
<dbReference type="GO" id="GO:0004824">
    <property type="term" value="F:lysine-tRNA ligase activity"/>
    <property type="evidence" value="ECO:0000318"/>
    <property type="project" value="GO_Central"/>
</dbReference>
<dbReference type="GO" id="GO:0000287">
    <property type="term" value="F:magnesium ion binding"/>
    <property type="evidence" value="ECO:0007669"/>
    <property type="project" value="UniProtKB-UniRule"/>
</dbReference>
<dbReference type="GO" id="GO:0000049">
    <property type="term" value="F:tRNA binding"/>
    <property type="evidence" value="ECO:0000318"/>
    <property type="project" value="GO_Central"/>
</dbReference>
<dbReference type="GO" id="GO:0006430">
    <property type="term" value="P:lysyl-tRNA aminoacylation"/>
    <property type="evidence" value="ECO:0000318"/>
    <property type="project" value="GO_Central"/>
</dbReference>
<dbReference type="CDD" id="cd00775">
    <property type="entry name" value="LysRS_core"/>
    <property type="match status" value="1"/>
</dbReference>
<dbReference type="CDD" id="cd04322">
    <property type="entry name" value="LysRS_N"/>
    <property type="match status" value="1"/>
</dbReference>
<dbReference type="FunFam" id="2.40.50.140:FF:000024">
    <property type="entry name" value="Lysine--tRNA ligase"/>
    <property type="match status" value="1"/>
</dbReference>
<dbReference type="FunFam" id="3.30.930.10:FF:000001">
    <property type="entry name" value="Lysine--tRNA ligase"/>
    <property type="match status" value="1"/>
</dbReference>
<dbReference type="Gene3D" id="3.30.930.10">
    <property type="entry name" value="Bira Bifunctional Protein, Domain 2"/>
    <property type="match status" value="1"/>
</dbReference>
<dbReference type="Gene3D" id="2.40.50.140">
    <property type="entry name" value="Nucleic acid-binding proteins"/>
    <property type="match status" value="1"/>
</dbReference>
<dbReference type="HAMAP" id="MF_00252">
    <property type="entry name" value="Lys_tRNA_synth_class2"/>
    <property type="match status" value="1"/>
</dbReference>
<dbReference type="InterPro" id="IPR004364">
    <property type="entry name" value="Aa-tRNA-synt_II"/>
</dbReference>
<dbReference type="InterPro" id="IPR006195">
    <property type="entry name" value="aa-tRNA-synth_II"/>
</dbReference>
<dbReference type="InterPro" id="IPR045864">
    <property type="entry name" value="aa-tRNA-synth_II/BPL/LPL"/>
</dbReference>
<dbReference type="InterPro" id="IPR002313">
    <property type="entry name" value="Lys-tRNA-ligase_II"/>
</dbReference>
<dbReference type="InterPro" id="IPR044136">
    <property type="entry name" value="Lys-tRNA-ligase_II_N"/>
</dbReference>
<dbReference type="InterPro" id="IPR018149">
    <property type="entry name" value="Lys-tRNA-synth_II_C"/>
</dbReference>
<dbReference type="InterPro" id="IPR012340">
    <property type="entry name" value="NA-bd_OB-fold"/>
</dbReference>
<dbReference type="InterPro" id="IPR004365">
    <property type="entry name" value="NA-bd_OB_tRNA"/>
</dbReference>
<dbReference type="NCBIfam" id="TIGR00499">
    <property type="entry name" value="lysS_bact"/>
    <property type="match status" value="1"/>
</dbReference>
<dbReference type="NCBIfam" id="NF001756">
    <property type="entry name" value="PRK00484.1"/>
    <property type="match status" value="1"/>
</dbReference>
<dbReference type="PANTHER" id="PTHR42918:SF15">
    <property type="entry name" value="LYSINE--TRNA LIGASE, CHLOROPLASTIC_MITOCHONDRIAL"/>
    <property type="match status" value="1"/>
</dbReference>
<dbReference type="PANTHER" id="PTHR42918">
    <property type="entry name" value="LYSYL-TRNA SYNTHETASE"/>
    <property type="match status" value="1"/>
</dbReference>
<dbReference type="Pfam" id="PF00152">
    <property type="entry name" value="tRNA-synt_2"/>
    <property type="match status" value="1"/>
</dbReference>
<dbReference type="Pfam" id="PF01336">
    <property type="entry name" value="tRNA_anti-codon"/>
    <property type="match status" value="1"/>
</dbReference>
<dbReference type="PRINTS" id="PR00982">
    <property type="entry name" value="TRNASYNTHLYS"/>
</dbReference>
<dbReference type="SUPFAM" id="SSF55681">
    <property type="entry name" value="Class II aaRS and biotin synthetases"/>
    <property type="match status" value="1"/>
</dbReference>
<dbReference type="SUPFAM" id="SSF50249">
    <property type="entry name" value="Nucleic acid-binding proteins"/>
    <property type="match status" value="1"/>
</dbReference>
<dbReference type="PROSITE" id="PS50862">
    <property type="entry name" value="AA_TRNA_LIGASE_II"/>
    <property type="match status" value="1"/>
</dbReference>
<gene>
    <name evidence="1" type="primary">lysS</name>
    <name type="ordered locus">NMB1425</name>
</gene>
<organism>
    <name type="scientific">Neisseria meningitidis serogroup B (strain ATCC BAA-335 / MC58)</name>
    <dbReference type="NCBI Taxonomy" id="122586"/>
    <lineage>
        <taxon>Bacteria</taxon>
        <taxon>Pseudomonadati</taxon>
        <taxon>Pseudomonadota</taxon>
        <taxon>Betaproteobacteria</taxon>
        <taxon>Neisseriales</taxon>
        <taxon>Neisseriaceae</taxon>
        <taxon>Neisseria</taxon>
    </lineage>
</organism>
<evidence type="ECO:0000255" key="1">
    <source>
        <dbReference type="HAMAP-Rule" id="MF_00252"/>
    </source>
</evidence>
<reference key="1">
    <citation type="journal article" date="2000" name="Science">
        <title>Complete genome sequence of Neisseria meningitidis serogroup B strain MC58.</title>
        <authorList>
            <person name="Tettelin H."/>
            <person name="Saunders N.J."/>
            <person name="Heidelberg J.F."/>
            <person name="Jeffries A.C."/>
            <person name="Nelson K.E."/>
            <person name="Eisen J.A."/>
            <person name="Ketchum K.A."/>
            <person name="Hood D.W."/>
            <person name="Peden J.F."/>
            <person name="Dodson R.J."/>
            <person name="Nelson W.C."/>
            <person name="Gwinn M.L."/>
            <person name="DeBoy R.T."/>
            <person name="Peterson J.D."/>
            <person name="Hickey E.K."/>
            <person name="Haft D.H."/>
            <person name="Salzberg S.L."/>
            <person name="White O."/>
            <person name="Fleischmann R.D."/>
            <person name="Dougherty B.A."/>
            <person name="Mason T.M."/>
            <person name="Ciecko A."/>
            <person name="Parksey D.S."/>
            <person name="Blair E."/>
            <person name="Cittone H."/>
            <person name="Clark E.B."/>
            <person name="Cotton M.D."/>
            <person name="Utterback T.R."/>
            <person name="Khouri H.M."/>
            <person name="Qin H."/>
            <person name="Vamathevan J.J."/>
            <person name="Gill J."/>
            <person name="Scarlato V."/>
            <person name="Masignani V."/>
            <person name="Pizza M."/>
            <person name="Grandi G."/>
            <person name="Sun L."/>
            <person name="Smith H.O."/>
            <person name="Fraser C.M."/>
            <person name="Moxon E.R."/>
            <person name="Rappuoli R."/>
            <person name="Venter J.C."/>
        </authorList>
    </citation>
    <scope>NUCLEOTIDE SEQUENCE [LARGE SCALE GENOMIC DNA]</scope>
    <source>
        <strain>ATCC BAA-335 / MC58</strain>
    </source>
</reference>
<keyword id="KW-0030">Aminoacyl-tRNA synthetase</keyword>
<keyword id="KW-0067">ATP-binding</keyword>
<keyword id="KW-0963">Cytoplasm</keyword>
<keyword id="KW-0436">Ligase</keyword>
<keyword id="KW-0460">Magnesium</keyword>
<keyword id="KW-0479">Metal-binding</keyword>
<keyword id="KW-0547">Nucleotide-binding</keyword>
<keyword id="KW-0648">Protein biosynthesis</keyword>
<keyword id="KW-1185">Reference proteome</keyword>
<feature type="chain" id="PRO_0000152659" description="Lysine--tRNA ligase">
    <location>
        <begin position="1"/>
        <end position="503"/>
    </location>
</feature>
<feature type="binding site" evidence="1">
    <location>
        <position position="414"/>
    </location>
    <ligand>
        <name>Mg(2+)</name>
        <dbReference type="ChEBI" id="CHEBI:18420"/>
        <label>1</label>
    </ligand>
</feature>
<feature type="binding site" evidence="1">
    <location>
        <position position="421"/>
    </location>
    <ligand>
        <name>Mg(2+)</name>
        <dbReference type="ChEBI" id="CHEBI:18420"/>
        <label>1</label>
    </ligand>
</feature>
<feature type="binding site" evidence="1">
    <location>
        <position position="421"/>
    </location>
    <ligand>
        <name>Mg(2+)</name>
        <dbReference type="ChEBI" id="CHEBI:18420"/>
        <label>2</label>
    </ligand>
</feature>
<proteinExistence type="inferred from homology"/>
<sequence length="503" mass="57312">MSEQNHPQTEPQLDENQIIALRREKLHNIRQQRNAYPNDFKRDSFAADLHAQYGEIGKEELDPQGIPVKVAGRMMLKRQMGKASFATIQDVSGQIQLYLNNKGVSQEVLDDFNHWDLGDIVGAEGTLFKTNHGELTVRVSGIRLLSKSLRPLPDKHKGLSDQETKYRQRYVDLIANEESRNTFIKRSQIIQSVRNFMVGEHYLEVETPMMHPIPGGATAKPFVTHHNALDIPLYLRIAPELYLKRLVVGGLERVFEINRSFRNEGMSVRHNPEFTMIEFYEAFSDYERMMQMAEDIIRNASRTVNGTANITYNGKEVDLESPFERLTILEAIKKYNPHYTDEQLNDAEWLKKEIVKHGESLPPSPGIGSLQLALFEGCAEGKLWNPTFIVDYPVEVSPLARASDTKQGLTERFELFVVGRELANGYSELNDPEDQAERFKAQVVQKDAGDDEAMHYDADYIRAMEFGLPPTGGCGIGIDRLVMLLTDSQTIRDVILFPQMRPE</sequence>
<comment type="catalytic activity">
    <reaction evidence="1">
        <text>tRNA(Lys) + L-lysine + ATP = L-lysyl-tRNA(Lys) + AMP + diphosphate</text>
        <dbReference type="Rhea" id="RHEA:20792"/>
        <dbReference type="Rhea" id="RHEA-COMP:9696"/>
        <dbReference type="Rhea" id="RHEA-COMP:9697"/>
        <dbReference type="ChEBI" id="CHEBI:30616"/>
        <dbReference type="ChEBI" id="CHEBI:32551"/>
        <dbReference type="ChEBI" id="CHEBI:33019"/>
        <dbReference type="ChEBI" id="CHEBI:78442"/>
        <dbReference type="ChEBI" id="CHEBI:78529"/>
        <dbReference type="ChEBI" id="CHEBI:456215"/>
        <dbReference type="EC" id="6.1.1.6"/>
    </reaction>
</comment>
<comment type="cofactor">
    <cofactor evidence="1">
        <name>Mg(2+)</name>
        <dbReference type="ChEBI" id="CHEBI:18420"/>
    </cofactor>
    <text evidence="1">Binds 3 Mg(2+) ions per subunit.</text>
</comment>
<comment type="subunit">
    <text evidence="1">Homodimer.</text>
</comment>
<comment type="subcellular location">
    <subcellularLocation>
        <location evidence="1">Cytoplasm</location>
    </subcellularLocation>
</comment>
<comment type="similarity">
    <text evidence="1">Belongs to the class-II aminoacyl-tRNA synthetase family.</text>
</comment>
<accession>Q9JYU6</accession>
<protein>
    <recommendedName>
        <fullName evidence="1">Lysine--tRNA ligase</fullName>
        <ecNumber evidence="1">6.1.1.6</ecNumber>
    </recommendedName>
    <alternativeName>
        <fullName evidence="1">Lysyl-tRNA synthetase</fullName>
        <shortName evidence="1">LysRS</shortName>
    </alternativeName>
</protein>